<keyword id="KW-0328">Glycosyltransferase</keyword>
<keyword id="KW-1185">Reference proteome</keyword>
<keyword id="KW-0808">Transferase</keyword>
<gene>
    <name type="primary">modD</name>
    <name type="ordered locus">Z1962</name>
    <name type="ordered locus">ECs1694</name>
</gene>
<dbReference type="EC" id="2.4.2.-"/>
<dbReference type="EMBL" id="AE005174">
    <property type="protein sequence ID" value="AAG56050.1"/>
    <property type="molecule type" value="Genomic_DNA"/>
</dbReference>
<dbReference type="EMBL" id="BA000007">
    <property type="protein sequence ID" value="BAB35117.1"/>
    <property type="molecule type" value="Genomic_DNA"/>
</dbReference>
<dbReference type="PIR" id="F85698">
    <property type="entry name" value="F85698"/>
</dbReference>
<dbReference type="PIR" id="F90840">
    <property type="entry name" value="F90840"/>
</dbReference>
<dbReference type="RefSeq" id="NP_309721.1">
    <property type="nucleotide sequence ID" value="NC_002695.1"/>
</dbReference>
<dbReference type="RefSeq" id="WP_000576838.1">
    <property type="nucleotide sequence ID" value="NZ_VOAI01000038.1"/>
</dbReference>
<dbReference type="SMR" id="P58496"/>
<dbReference type="STRING" id="155864.Z1962"/>
<dbReference type="GeneID" id="75171303"/>
<dbReference type="GeneID" id="913170"/>
<dbReference type="KEGG" id="ece:Z1962"/>
<dbReference type="KEGG" id="ecs:ECs_1694"/>
<dbReference type="PATRIC" id="fig|386585.9.peg.1793"/>
<dbReference type="eggNOG" id="COG0157">
    <property type="taxonomic scope" value="Bacteria"/>
</dbReference>
<dbReference type="HOGENOM" id="CLU_039622_2_1_6"/>
<dbReference type="OMA" id="GGHIHRQ"/>
<dbReference type="Proteomes" id="UP000000558">
    <property type="component" value="Chromosome"/>
</dbReference>
<dbReference type="Proteomes" id="UP000002519">
    <property type="component" value="Chromosome"/>
</dbReference>
<dbReference type="GO" id="GO:0005737">
    <property type="term" value="C:cytoplasm"/>
    <property type="evidence" value="ECO:0007669"/>
    <property type="project" value="TreeGrafter"/>
</dbReference>
<dbReference type="GO" id="GO:0004514">
    <property type="term" value="F:nicotinate-nucleotide diphosphorylase (carboxylating) activity"/>
    <property type="evidence" value="ECO:0007669"/>
    <property type="project" value="InterPro"/>
</dbReference>
<dbReference type="GO" id="GO:0009435">
    <property type="term" value="P:NAD biosynthetic process"/>
    <property type="evidence" value="ECO:0007669"/>
    <property type="project" value="InterPro"/>
</dbReference>
<dbReference type="GO" id="GO:0034213">
    <property type="term" value="P:quinolinate catabolic process"/>
    <property type="evidence" value="ECO:0007669"/>
    <property type="project" value="TreeGrafter"/>
</dbReference>
<dbReference type="CDD" id="cd01573">
    <property type="entry name" value="modD_like"/>
    <property type="match status" value="1"/>
</dbReference>
<dbReference type="FunFam" id="3.20.20.70:FF:000030">
    <property type="entry name" value="Nicotinate-nucleotide pyrophosphorylase, carboxylating"/>
    <property type="match status" value="1"/>
</dbReference>
<dbReference type="Gene3D" id="3.20.20.70">
    <property type="entry name" value="Aldolase class I"/>
    <property type="match status" value="1"/>
</dbReference>
<dbReference type="Gene3D" id="3.90.1170.20">
    <property type="entry name" value="Quinolinate phosphoribosyl transferase, N-terminal domain"/>
    <property type="match status" value="1"/>
</dbReference>
<dbReference type="InterPro" id="IPR013785">
    <property type="entry name" value="Aldolase_TIM"/>
</dbReference>
<dbReference type="InterPro" id="IPR006242">
    <property type="entry name" value="ModD"/>
</dbReference>
<dbReference type="InterPro" id="IPR027277">
    <property type="entry name" value="NadC/ModD"/>
</dbReference>
<dbReference type="InterPro" id="IPR036068">
    <property type="entry name" value="Nicotinate_pribotase-like_C"/>
</dbReference>
<dbReference type="InterPro" id="IPR037128">
    <property type="entry name" value="Quinolinate_PRibosylTase_N_sf"/>
</dbReference>
<dbReference type="InterPro" id="IPR002638">
    <property type="entry name" value="Quinolinate_PRibosylTrfase_C"/>
</dbReference>
<dbReference type="InterPro" id="IPR022412">
    <property type="entry name" value="Quinolinate_PRibosylTrfase_N"/>
</dbReference>
<dbReference type="NCBIfam" id="TIGR01334">
    <property type="entry name" value="modD"/>
    <property type="match status" value="1"/>
</dbReference>
<dbReference type="PANTHER" id="PTHR32179">
    <property type="entry name" value="NICOTINATE-NUCLEOTIDE PYROPHOSPHORYLASE [CARBOXYLATING]"/>
    <property type="match status" value="1"/>
</dbReference>
<dbReference type="PANTHER" id="PTHR32179:SF4">
    <property type="entry name" value="PYROPHOSPHORYLASE MODD-RELATED"/>
    <property type="match status" value="1"/>
</dbReference>
<dbReference type="Pfam" id="PF01729">
    <property type="entry name" value="QRPTase_C"/>
    <property type="match status" value="1"/>
</dbReference>
<dbReference type="Pfam" id="PF02749">
    <property type="entry name" value="QRPTase_N"/>
    <property type="match status" value="1"/>
</dbReference>
<dbReference type="PIRSF" id="PIRSF006250">
    <property type="entry name" value="NadC_ModD"/>
    <property type="match status" value="1"/>
</dbReference>
<dbReference type="SUPFAM" id="SSF51690">
    <property type="entry name" value="Nicotinate/Quinolinate PRTase C-terminal domain-like"/>
    <property type="match status" value="1"/>
</dbReference>
<dbReference type="SUPFAM" id="SSF54675">
    <property type="entry name" value="Nicotinate/Quinolinate PRTase N-terminal domain-like"/>
    <property type="match status" value="1"/>
</dbReference>
<protein>
    <recommendedName>
        <fullName>Putative pyrophosphorylase ModD</fullName>
        <ecNumber>2.4.2.-</ecNumber>
    </recommendedName>
</protein>
<organism>
    <name type="scientific">Escherichia coli O157:H7</name>
    <dbReference type="NCBI Taxonomy" id="83334"/>
    <lineage>
        <taxon>Bacteria</taxon>
        <taxon>Pseudomonadati</taxon>
        <taxon>Pseudomonadota</taxon>
        <taxon>Gammaproteobacteria</taxon>
        <taxon>Enterobacterales</taxon>
        <taxon>Enterobacteriaceae</taxon>
        <taxon>Escherichia</taxon>
    </lineage>
</organism>
<sequence>MIFLSQAQIDALLLEDIQGGDLTTRALNIGHQHGYIEFFLRQGGCVSGVSVACKMLTTLGLTIDDAVSDGSQANAGQRLIRAQGNAAALHQGWKAIQNVLEWSCGVSDYLDQMLALLRERYPDGNIACTRKAIPGTRLLASQAILAAGGLIHRAGCAETILLFANHRHFLHDNQDWSGAINQLRRHAPEKKIVVEADTPKEAIAALRAQPDVLQLDKFSPQQATEIAQIAPSLAPHCTLALTGGINLTTLKNYLDCGIRLFITSAPYYAAPADIKVSLQPAASI</sequence>
<name>MODD_ECO57</name>
<comment type="similarity">
    <text evidence="1">Belongs to the NadC/ModD family.</text>
</comment>
<accession>P58496</accession>
<reference key="1">
    <citation type="journal article" date="2001" name="Nature">
        <title>Genome sequence of enterohaemorrhagic Escherichia coli O157:H7.</title>
        <authorList>
            <person name="Perna N.T."/>
            <person name="Plunkett G. III"/>
            <person name="Burland V."/>
            <person name="Mau B."/>
            <person name="Glasner J.D."/>
            <person name="Rose D.J."/>
            <person name="Mayhew G.F."/>
            <person name="Evans P.S."/>
            <person name="Gregor J."/>
            <person name="Kirkpatrick H.A."/>
            <person name="Posfai G."/>
            <person name="Hackett J."/>
            <person name="Klink S."/>
            <person name="Boutin A."/>
            <person name="Shao Y."/>
            <person name="Miller L."/>
            <person name="Grotbeck E.J."/>
            <person name="Davis N.W."/>
            <person name="Lim A."/>
            <person name="Dimalanta E.T."/>
            <person name="Potamousis K."/>
            <person name="Apodaca J."/>
            <person name="Anantharaman T.S."/>
            <person name="Lin J."/>
            <person name="Yen G."/>
            <person name="Schwartz D.C."/>
            <person name="Welch R.A."/>
            <person name="Blattner F.R."/>
        </authorList>
    </citation>
    <scope>NUCLEOTIDE SEQUENCE [LARGE SCALE GENOMIC DNA]</scope>
    <source>
        <strain>O157:H7 / EDL933 / ATCC 700927 / EHEC</strain>
    </source>
</reference>
<reference key="2">
    <citation type="journal article" date="2001" name="DNA Res.">
        <title>Complete genome sequence of enterohemorrhagic Escherichia coli O157:H7 and genomic comparison with a laboratory strain K-12.</title>
        <authorList>
            <person name="Hayashi T."/>
            <person name="Makino K."/>
            <person name="Ohnishi M."/>
            <person name="Kurokawa K."/>
            <person name="Ishii K."/>
            <person name="Yokoyama K."/>
            <person name="Han C.-G."/>
            <person name="Ohtsubo E."/>
            <person name="Nakayama K."/>
            <person name="Murata T."/>
            <person name="Tanaka M."/>
            <person name="Tobe T."/>
            <person name="Iida T."/>
            <person name="Takami H."/>
            <person name="Honda T."/>
            <person name="Sasakawa C."/>
            <person name="Ogasawara N."/>
            <person name="Yasunaga T."/>
            <person name="Kuhara S."/>
            <person name="Shiba T."/>
            <person name="Hattori M."/>
            <person name="Shinagawa H."/>
        </authorList>
    </citation>
    <scope>NUCLEOTIDE SEQUENCE [LARGE SCALE GENOMIC DNA]</scope>
    <source>
        <strain>O157:H7 / Sakai / RIMD 0509952 / EHEC</strain>
    </source>
</reference>
<evidence type="ECO:0000305" key="1"/>
<feature type="chain" id="PRO_0000155959" description="Putative pyrophosphorylase ModD">
    <location>
        <begin position="1"/>
        <end position="284"/>
    </location>
</feature>
<proteinExistence type="inferred from homology"/>